<gene>
    <name evidence="1" type="primary">rpoC</name>
    <name type="ordered locus">PputGB1_0478</name>
</gene>
<evidence type="ECO:0000255" key="1">
    <source>
        <dbReference type="HAMAP-Rule" id="MF_01322"/>
    </source>
</evidence>
<feature type="chain" id="PRO_1000086405" description="DNA-directed RNA polymerase subunit beta'">
    <location>
        <begin position="1"/>
        <end position="1399"/>
    </location>
</feature>
<feature type="binding site" evidence="1">
    <location>
        <position position="70"/>
    </location>
    <ligand>
        <name>Zn(2+)</name>
        <dbReference type="ChEBI" id="CHEBI:29105"/>
        <label>1</label>
    </ligand>
</feature>
<feature type="binding site" evidence="1">
    <location>
        <position position="72"/>
    </location>
    <ligand>
        <name>Zn(2+)</name>
        <dbReference type="ChEBI" id="CHEBI:29105"/>
        <label>1</label>
    </ligand>
</feature>
<feature type="binding site" evidence="1">
    <location>
        <position position="85"/>
    </location>
    <ligand>
        <name>Zn(2+)</name>
        <dbReference type="ChEBI" id="CHEBI:29105"/>
        <label>1</label>
    </ligand>
</feature>
<feature type="binding site" evidence="1">
    <location>
        <position position="88"/>
    </location>
    <ligand>
        <name>Zn(2+)</name>
        <dbReference type="ChEBI" id="CHEBI:29105"/>
        <label>1</label>
    </ligand>
</feature>
<feature type="binding site" evidence="1">
    <location>
        <position position="460"/>
    </location>
    <ligand>
        <name>Mg(2+)</name>
        <dbReference type="ChEBI" id="CHEBI:18420"/>
    </ligand>
</feature>
<feature type="binding site" evidence="1">
    <location>
        <position position="462"/>
    </location>
    <ligand>
        <name>Mg(2+)</name>
        <dbReference type="ChEBI" id="CHEBI:18420"/>
    </ligand>
</feature>
<feature type="binding site" evidence="1">
    <location>
        <position position="464"/>
    </location>
    <ligand>
        <name>Mg(2+)</name>
        <dbReference type="ChEBI" id="CHEBI:18420"/>
    </ligand>
</feature>
<feature type="binding site" evidence="1">
    <location>
        <position position="814"/>
    </location>
    <ligand>
        <name>Zn(2+)</name>
        <dbReference type="ChEBI" id="CHEBI:29105"/>
        <label>2</label>
    </ligand>
</feature>
<feature type="binding site" evidence="1">
    <location>
        <position position="888"/>
    </location>
    <ligand>
        <name>Zn(2+)</name>
        <dbReference type="ChEBI" id="CHEBI:29105"/>
        <label>2</label>
    </ligand>
</feature>
<feature type="binding site" evidence="1">
    <location>
        <position position="895"/>
    </location>
    <ligand>
        <name>Zn(2+)</name>
        <dbReference type="ChEBI" id="CHEBI:29105"/>
        <label>2</label>
    </ligand>
</feature>
<feature type="binding site" evidence="1">
    <location>
        <position position="898"/>
    </location>
    <ligand>
        <name>Zn(2+)</name>
        <dbReference type="ChEBI" id="CHEBI:29105"/>
        <label>2</label>
    </ligand>
</feature>
<reference key="1">
    <citation type="submission" date="2008-01" db="EMBL/GenBank/DDBJ databases">
        <title>Complete sequence of Pseudomonas putida GB-1.</title>
        <authorList>
            <consortium name="US DOE Joint Genome Institute"/>
            <person name="Copeland A."/>
            <person name="Lucas S."/>
            <person name="Lapidus A."/>
            <person name="Barry K."/>
            <person name="Glavina del Rio T."/>
            <person name="Dalin E."/>
            <person name="Tice H."/>
            <person name="Pitluck S."/>
            <person name="Bruce D."/>
            <person name="Goodwin L."/>
            <person name="Chertkov O."/>
            <person name="Brettin T."/>
            <person name="Detter J.C."/>
            <person name="Han C."/>
            <person name="Kuske C.R."/>
            <person name="Schmutz J."/>
            <person name="Larimer F."/>
            <person name="Land M."/>
            <person name="Hauser L."/>
            <person name="Kyrpides N."/>
            <person name="Kim E."/>
            <person name="McCarthy J.K."/>
            <person name="Richardson P."/>
        </authorList>
    </citation>
    <scope>NUCLEOTIDE SEQUENCE [LARGE SCALE GENOMIC DNA]</scope>
    <source>
        <strain>GB-1</strain>
    </source>
</reference>
<keyword id="KW-0240">DNA-directed RNA polymerase</keyword>
<keyword id="KW-0460">Magnesium</keyword>
<keyword id="KW-0479">Metal-binding</keyword>
<keyword id="KW-0548">Nucleotidyltransferase</keyword>
<keyword id="KW-0804">Transcription</keyword>
<keyword id="KW-0808">Transferase</keyword>
<keyword id="KW-0862">Zinc</keyword>
<protein>
    <recommendedName>
        <fullName evidence="1">DNA-directed RNA polymerase subunit beta'</fullName>
        <shortName evidence="1">RNAP subunit beta'</shortName>
        <ecNumber evidence="1">2.7.7.6</ecNumber>
    </recommendedName>
    <alternativeName>
        <fullName evidence="1">RNA polymerase subunit beta'</fullName>
    </alternativeName>
    <alternativeName>
        <fullName evidence="1">Transcriptase subunit beta'</fullName>
    </alternativeName>
</protein>
<sequence length="1399" mass="154847">MKDLLNLLKNQGQVEEFDAIRIGLASPEMIRSWSFGEVKKPETINYRTFKPERDGLFCAKIFGPVKDYECLCGKYKRLKHRGVICEKCGVEVALAKVRRERMAHIELASPVAHIWFLKSLPSRIGLLMDMTLRDIERVLYFESYVVIDPGMTTLEKGQLLNDEQYFEALEEFGDDFDARMGAEAVRELLHAIDLEHEIGRLREEIPQTNSETKIKKLSKRLKLMEAFQGSGNLPEWMVLTVLPVLPPDLRPLVPLDGGRFATSDLNDLYRRVINRNNRLKRLLDLSAPDIIVRNEKRMLQEAVDALLDNGRRGRAITGSNKRPLKSLADMIKGKQGRFRQNLLGKRVDYSGRSVITVGPTLRLHQCGLPKKMALELFKPFIFGKLEMRGLATTIKAAKKMVERELPEVWDVLAEVIREHPVLLNRAPTLHRLGIQAFEPVLIEGKAIQLHPLVCAAYNADFDGDQMAVHVPLTLEAQLEARALMMSTNNILSPANGEPIIVPSQDVVLGLYYMTREAINAKGEGRVFADLQEVDRVFRAGEAALHAKIKVRINETVKDRDGSVTKNTRIVDTTVGRALLFQVVPAGLPYDVVNQPMKKKAISKLINQCYRVVGLKETVIFADQLMYTGFAYSTISGVSIGVNDFVIPDEKARIINSATDEVKEIESQYASGLVTQGEKYNKVIDLWSKANDEVSKAMMANLSKEKVIDREGKEVEQESFNSMYMMADSGARGSAAQIRQLAGMRGLMAKPDGSIIETPITANFREGLSVLQYFISTHGARKGLADTALKTANSGYLTRRLVDVAQDLVVTEIDCGTDHGLLMTPHIEGGDVVEPLGERVLGRVIARDVFKPGTEDVIVPAGTLVDEQWVEFIELNSIDEVIVRSPINCETRYGICAKCYGRDLARGHQVNIGEAVGVIAAQSIGEPGTQLTMRTFHIGGAASRTSAADSVQVKNGGMVRLHNLKQVERADGNLVAVSRSGELAIADEFGRERERYKLPYGAVISVKEGEKVEAGAIVAKWDPHTHPIVTELKGTVTFVGMEENITIKRQTDELTGLTNIEVLDVKDRPAAGKEIRPAIKMVDANGKDLYLPGTDVPAQYFLPANALVGVADGAQIGVGDVIARIPQETSKTRDITGGLPRVADLFEARRPKEASILAEVSGTIAFGKETKGKRRLVITPTDGSDPYEELIPKWRHLNVFEGEQVNRGEVISDGPSDPHDILRLLGVSALAKYIVNEIQDVYRLQGVKINDKHIETILRQMLRKVEISESGDSSFIKGDQMELTHVLVENERLAGEDKFISKFTRVLLGITKASLSTESFISAASFQETTRVLTEAAVTGKRDYLRGLKENVVVGRLIPAGTGLAYHSERKRRRDADKPLRVSASEVEAALTEALNSSGN</sequence>
<name>RPOC_PSEPG</name>
<accession>B0KK61</accession>
<organism>
    <name type="scientific">Pseudomonas putida (strain GB-1)</name>
    <dbReference type="NCBI Taxonomy" id="76869"/>
    <lineage>
        <taxon>Bacteria</taxon>
        <taxon>Pseudomonadati</taxon>
        <taxon>Pseudomonadota</taxon>
        <taxon>Gammaproteobacteria</taxon>
        <taxon>Pseudomonadales</taxon>
        <taxon>Pseudomonadaceae</taxon>
        <taxon>Pseudomonas</taxon>
    </lineage>
</organism>
<dbReference type="EC" id="2.7.7.6" evidence="1"/>
<dbReference type="EMBL" id="CP000926">
    <property type="protein sequence ID" value="ABY96389.1"/>
    <property type="molecule type" value="Genomic_DNA"/>
</dbReference>
<dbReference type="RefSeq" id="WP_012270234.1">
    <property type="nucleotide sequence ID" value="NC_010322.1"/>
</dbReference>
<dbReference type="SMR" id="B0KK61"/>
<dbReference type="KEGG" id="ppg:PputGB1_0478"/>
<dbReference type="eggNOG" id="COG0086">
    <property type="taxonomic scope" value="Bacteria"/>
</dbReference>
<dbReference type="HOGENOM" id="CLU_000524_3_1_6"/>
<dbReference type="Proteomes" id="UP000002157">
    <property type="component" value="Chromosome"/>
</dbReference>
<dbReference type="GO" id="GO:0000428">
    <property type="term" value="C:DNA-directed RNA polymerase complex"/>
    <property type="evidence" value="ECO:0007669"/>
    <property type="project" value="UniProtKB-KW"/>
</dbReference>
<dbReference type="GO" id="GO:0003677">
    <property type="term" value="F:DNA binding"/>
    <property type="evidence" value="ECO:0007669"/>
    <property type="project" value="UniProtKB-UniRule"/>
</dbReference>
<dbReference type="GO" id="GO:0003899">
    <property type="term" value="F:DNA-directed RNA polymerase activity"/>
    <property type="evidence" value="ECO:0007669"/>
    <property type="project" value="UniProtKB-UniRule"/>
</dbReference>
<dbReference type="GO" id="GO:0000287">
    <property type="term" value="F:magnesium ion binding"/>
    <property type="evidence" value="ECO:0007669"/>
    <property type="project" value="UniProtKB-UniRule"/>
</dbReference>
<dbReference type="GO" id="GO:0008270">
    <property type="term" value="F:zinc ion binding"/>
    <property type="evidence" value="ECO:0007669"/>
    <property type="project" value="UniProtKB-UniRule"/>
</dbReference>
<dbReference type="GO" id="GO:0006351">
    <property type="term" value="P:DNA-templated transcription"/>
    <property type="evidence" value="ECO:0007669"/>
    <property type="project" value="UniProtKB-UniRule"/>
</dbReference>
<dbReference type="CDD" id="cd02655">
    <property type="entry name" value="RNAP_beta'_C"/>
    <property type="match status" value="1"/>
</dbReference>
<dbReference type="CDD" id="cd01609">
    <property type="entry name" value="RNAP_beta'_N"/>
    <property type="match status" value="1"/>
</dbReference>
<dbReference type="FunFam" id="1.10.132.30:FF:000003">
    <property type="entry name" value="DNA-directed RNA polymerase subunit beta"/>
    <property type="match status" value="1"/>
</dbReference>
<dbReference type="FunFam" id="1.10.150.390:FF:000002">
    <property type="entry name" value="DNA-directed RNA polymerase subunit beta"/>
    <property type="match status" value="1"/>
</dbReference>
<dbReference type="FunFam" id="1.10.40.90:FF:000001">
    <property type="entry name" value="DNA-directed RNA polymerase subunit beta"/>
    <property type="match status" value="1"/>
</dbReference>
<dbReference type="FunFam" id="4.10.860.120:FF:000001">
    <property type="entry name" value="DNA-directed RNA polymerase subunit beta"/>
    <property type="match status" value="1"/>
</dbReference>
<dbReference type="Gene3D" id="1.10.132.30">
    <property type="match status" value="1"/>
</dbReference>
<dbReference type="Gene3D" id="1.10.150.390">
    <property type="match status" value="1"/>
</dbReference>
<dbReference type="Gene3D" id="1.10.1790.20">
    <property type="match status" value="1"/>
</dbReference>
<dbReference type="Gene3D" id="1.10.40.90">
    <property type="match status" value="1"/>
</dbReference>
<dbReference type="Gene3D" id="2.40.40.20">
    <property type="match status" value="1"/>
</dbReference>
<dbReference type="Gene3D" id="2.40.50.100">
    <property type="match status" value="3"/>
</dbReference>
<dbReference type="Gene3D" id="4.10.860.120">
    <property type="entry name" value="RNA polymerase II, clamp domain"/>
    <property type="match status" value="1"/>
</dbReference>
<dbReference type="Gene3D" id="1.10.274.100">
    <property type="entry name" value="RNA polymerase Rpb1, domain 3"/>
    <property type="match status" value="1"/>
</dbReference>
<dbReference type="HAMAP" id="MF_01322">
    <property type="entry name" value="RNApol_bact_RpoC"/>
    <property type="match status" value="1"/>
</dbReference>
<dbReference type="InterPro" id="IPR045867">
    <property type="entry name" value="DNA-dir_RpoC_beta_prime"/>
</dbReference>
<dbReference type="InterPro" id="IPR012754">
    <property type="entry name" value="DNA-dir_RpoC_beta_prime_bact"/>
</dbReference>
<dbReference type="InterPro" id="IPR000722">
    <property type="entry name" value="RNA_pol_asu"/>
</dbReference>
<dbReference type="InterPro" id="IPR006592">
    <property type="entry name" value="RNA_pol_N"/>
</dbReference>
<dbReference type="InterPro" id="IPR007080">
    <property type="entry name" value="RNA_pol_Rpb1_1"/>
</dbReference>
<dbReference type="InterPro" id="IPR007066">
    <property type="entry name" value="RNA_pol_Rpb1_3"/>
</dbReference>
<dbReference type="InterPro" id="IPR042102">
    <property type="entry name" value="RNA_pol_Rpb1_3_sf"/>
</dbReference>
<dbReference type="InterPro" id="IPR007083">
    <property type="entry name" value="RNA_pol_Rpb1_4"/>
</dbReference>
<dbReference type="InterPro" id="IPR007081">
    <property type="entry name" value="RNA_pol_Rpb1_5"/>
</dbReference>
<dbReference type="InterPro" id="IPR044893">
    <property type="entry name" value="RNA_pol_Rpb1_clamp_domain"/>
</dbReference>
<dbReference type="InterPro" id="IPR038120">
    <property type="entry name" value="Rpb1_funnel_sf"/>
</dbReference>
<dbReference type="NCBIfam" id="TIGR02386">
    <property type="entry name" value="rpoC_TIGR"/>
    <property type="match status" value="1"/>
</dbReference>
<dbReference type="PANTHER" id="PTHR19376">
    <property type="entry name" value="DNA-DIRECTED RNA POLYMERASE"/>
    <property type="match status" value="1"/>
</dbReference>
<dbReference type="PANTHER" id="PTHR19376:SF54">
    <property type="entry name" value="DNA-DIRECTED RNA POLYMERASE SUBUNIT BETA"/>
    <property type="match status" value="1"/>
</dbReference>
<dbReference type="Pfam" id="PF04997">
    <property type="entry name" value="RNA_pol_Rpb1_1"/>
    <property type="match status" value="1"/>
</dbReference>
<dbReference type="Pfam" id="PF00623">
    <property type="entry name" value="RNA_pol_Rpb1_2"/>
    <property type="match status" value="2"/>
</dbReference>
<dbReference type="Pfam" id="PF04983">
    <property type="entry name" value="RNA_pol_Rpb1_3"/>
    <property type="match status" value="1"/>
</dbReference>
<dbReference type="Pfam" id="PF05000">
    <property type="entry name" value="RNA_pol_Rpb1_4"/>
    <property type="match status" value="1"/>
</dbReference>
<dbReference type="Pfam" id="PF04998">
    <property type="entry name" value="RNA_pol_Rpb1_5"/>
    <property type="match status" value="1"/>
</dbReference>
<dbReference type="SMART" id="SM00663">
    <property type="entry name" value="RPOLA_N"/>
    <property type="match status" value="1"/>
</dbReference>
<dbReference type="SUPFAM" id="SSF64484">
    <property type="entry name" value="beta and beta-prime subunits of DNA dependent RNA-polymerase"/>
    <property type="match status" value="1"/>
</dbReference>
<comment type="function">
    <text evidence="1">DNA-dependent RNA polymerase catalyzes the transcription of DNA into RNA using the four ribonucleoside triphosphates as substrates.</text>
</comment>
<comment type="catalytic activity">
    <reaction evidence="1">
        <text>RNA(n) + a ribonucleoside 5'-triphosphate = RNA(n+1) + diphosphate</text>
        <dbReference type="Rhea" id="RHEA:21248"/>
        <dbReference type="Rhea" id="RHEA-COMP:14527"/>
        <dbReference type="Rhea" id="RHEA-COMP:17342"/>
        <dbReference type="ChEBI" id="CHEBI:33019"/>
        <dbReference type="ChEBI" id="CHEBI:61557"/>
        <dbReference type="ChEBI" id="CHEBI:140395"/>
        <dbReference type="EC" id="2.7.7.6"/>
    </reaction>
</comment>
<comment type="cofactor">
    <cofactor evidence="1">
        <name>Mg(2+)</name>
        <dbReference type="ChEBI" id="CHEBI:18420"/>
    </cofactor>
    <text evidence="1">Binds 1 Mg(2+) ion per subunit.</text>
</comment>
<comment type="cofactor">
    <cofactor evidence="1">
        <name>Zn(2+)</name>
        <dbReference type="ChEBI" id="CHEBI:29105"/>
    </cofactor>
    <text evidence="1">Binds 2 Zn(2+) ions per subunit.</text>
</comment>
<comment type="subunit">
    <text evidence="1">The RNAP catalytic core consists of 2 alpha, 1 beta, 1 beta' and 1 omega subunit. When a sigma factor is associated with the core the holoenzyme is formed, which can initiate transcription.</text>
</comment>
<comment type="similarity">
    <text evidence="1">Belongs to the RNA polymerase beta' chain family.</text>
</comment>
<proteinExistence type="inferred from homology"/>